<name>PAN_METAR</name>
<organism>
    <name type="scientific">Methanocella arvoryzae (strain DSM 22066 / NBRC 105507 / MRE50)</name>
    <dbReference type="NCBI Taxonomy" id="351160"/>
    <lineage>
        <taxon>Archaea</taxon>
        <taxon>Methanobacteriati</taxon>
        <taxon>Methanobacteriota</taxon>
        <taxon>Stenosarchaea group</taxon>
        <taxon>Methanomicrobia</taxon>
        <taxon>Methanocellales</taxon>
        <taxon>Methanocellaceae</taxon>
        <taxon>Methanocella</taxon>
    </lineage>
</organism>
<protein>
    <recommendedName>
        <fullName evidence="1">Proteasome-activating nucleotidase</fullName>
        <shortName evidence="1">PAN</shortName>
    </recommendedName>
    <alternativeName>
        <fullName evidence="1">Proteasomal ATPase</fullName>
    </alternativeName>
    <alternativeName>
        <fullName evidence="1">Proteasome regulatory ATPase</fullName>
    </alternativeName>
    <alternativeName>
        <fullName evidence="1">Proteasome regulatory particle</fullName>
    </alternativeName>
</protein>
<sequence length="417" mass="46239">MQTILMAEGSGLDFTGEVPLSDFSKYLLDRVKQLEERNVRLKEEYRKIELEKKSVENKKVQYEREIRKLTSELDRLKTPPLIVGTILDVMANGKMIIKSSTGPKFVVNSSQFINSKEVYPGAKVALNQQSLAVIEVLPTVKDPSVLGMEVVDSPEIDYQSIGGLEAQINELKETVELPLLKPELFQKVGIEPPKGVLLYGPPGTGKTLLAKAVANRTKATFIRIIGSELVQKYIGEGARMVRELFELAKEKSPSIIFIDEIDSIGAKRLDSITSGDREVQRTLVQLLAEMDGFDPRGNVRILAATNRPDILDPALLRPGRFDRMIKVPMPTAEAREQILKIHARKMNLADDVDLRKIALITDESSGADLSAIVMEAGMFAIRNNRDVVDSSDFNAAVAKVMGERNRSMAQESGVMFA</sequence>
<dbReference type="EMBL" id="AM114193">
    <property type="protein sequence ID" value="CAJ37536.1"/>
    <property type="molecule type" value="Genomic_DNA"/>
</dbReference>
<dbReference type="SMR" id="Q0W257"/>
<dbReference type="STRING" id="351160.RCIX2455"/>
<dbReference type="KEGG" id="rci:RCIX2455"/>
<dbReference type="PATRIC" id="fig|351160.9.peg.750"/>
<dbReference type="eggNOG" id="arCOG01306">
    <property type="taxonomic scope" value="Archaea"/>
</dbReference>
<dbReference type="Proteomes" id="UP000000663">
    <property type="component" value="Chromosome"/>
</dbReference>
<dbReference type="GO" id="GO:0005737">
    <property type="term" value="C:cytoplasm"/>
    <property type="evidence" value="ECO:0007669"/>
    <property type="project" value="UniProtKB-SubCell"/>
</dbReference>
<dbReference type="GO" id="GO:0022623">
    <property type="term" value="C:proteasome-activating nucleotidase complex"/>
    <property type="evidence" value="ECO:0007669"/>
    <property type="project" value="UniProtKB-UniRule"/>
</dbReference>
<dbReference type="GO" id="GO:0005524">
    <property type="term" value="F:ATP binding"/>
    <property type="evidence" value="ECO:0007669"/>
    <property type="project" value="UniProtKB-UniRule"/>
</dbReference>
<dbReference type="GO" id="GO:0016887">
    <property type="term" value="F:ATP hydrolysis activity"/>
    <property type="evidence" value="ECO:0007669"/>
    <property type="project" value="UniProtKB-UniRule"/>
</dbReference>
<dbReference type="GO" id="GO:0010498">
    <property type="term" value="P:proteasomal protein catabolic process"/>
    <property type="evidence" value="ECO:0007669"/>
    <property type="project" value="UniProtKB-UniRule"/>
</dbReference>
<dbReference type="GO" id="GO:0043335">
    <property type="term" value="P:protein unfolding"/>
    <property type="evidence" value="ECO:0007669"/>
    <property type="project" value="UniProtKB-UniRule"/>
</dbReference>
<dbReference type="CDD" id="cd19502">
    <property type="entry name" value="RecA-like_PAN_like"/>
    <property type="match status" value="1"/>
</dbReference>
<dbReference type="FunFam" id="3.40.50.300:FF:000033">
    <property type="entry name" value="26S protease regulatory subunit 6B"/>
    <property type="match status" value="1"/>
</dbReference>
<dbReference type="FunFam" id="1.10.8.60:FF:000006">
    <property type="entry name" value="26S protease regulatory subunit 8"/>
    <property type="match status" value="1"/>
</dbReference>
<dbReference type="Gene3D" id="1.10.8.60">
    <property type="match status" value="1"/>
</dbReference>
<dbReference type="Gene3D" id="2.40.50.140">
    <property type="entry name" value="Nucleic acid-binding proteins"/>
    <property type="match status" value="1"/>
</dbReference>
<dbReference type="Gene3D" id="3.40.50.300">
    <property type="entry name" value="P-loop containing nucleotide triphosphate hydrolases"/>
    <property type="match status" value="1"/>
</dbReference>
<dbReference type="HAMAP" id="MF_00553">
    <property type="entry name" value="PAN"/>
    <property type="match status" value="1"/>
</dbReference>
<dbReference type="InterPro" id="IPR050221">
    <property type="entry name" value="26S_Proteasome_ATPase"/>
</dbReference>
<dbReference type="InterPro" id="IPR003593">
    <property type="entry name" value="AAA+_ATPase"/>
</dbReference>
<dbReference type="InterPro" id="IPR041569">
    <property type="entry name" value="AAA_lid_3"/>
</dbReference>
<dbReference type="InterPro" id="IPR003959">
    <property type="entry name" value="ATPase_AAA_core"/>
</dbReference>
<dbReference type="InterPro" id="IPR003960">
    <property type="entry name" value="ATPase_AAA_CS"/>
</dbReference>
<dbReference type="InterPro" id="IPR012340">
    <property type="entry name" value="NA-bd_OB-fold"/>
</dbReference>
<dbReference type="InterPro" id="IPR023501">
    <property type="entry name" value="Nucleotidase_PAN"/>
</dbReference>
<dbReference type="InterPro" id="IPR027417">
    <property type="entry name" value="P-loop_NTPase"/>
</dbReference>
<dbReference type="InterPro" id="IPR032501">
    <property type="entry name" value="Prot_ATP_ID_OB_2nd"/>
</dbReference>
<dbReference type="NCBIfam" id="NF003069">
    <property type="entry name" value="PRK03992.1"/>
    <property type="match status" value="1"/>
</dbReference>
<dbReference type="NCBIfam" id="TIGR01242">
    <property type="entry name" value="proteasome-activating nucleotidase"/>
    <property type="match status" value="1"/>
</dbReference>
<dbReference type="PANTHER" id="PTHR23073">
    <property type="entry name" value="26S PROTEASOME REGULATORY SUBUNIT"/>
    <property type="match status" value="1"/>
</dbReference>
<dbReference type="Pfam" id="PF00004">
    <property type="entry name" value="AAA"/>
    <property type="match status" value="1"/>
</dbReference>
<dbReference type="Pfam" id="PF17862">
    <property type="entry name" value="AAA_lid_3"/>
    <property type="match status" value="1"/>
</dbReference>
<dbReference type="Pfam" id="PF16450">
    <property type="entry name" value="Prot_ATP_ID_OB_C"/>
    <property type="match status" value="1"/>
</dbReference>
<dbReference type="SMART" id="SM00382">
    <property type="entry name" value="AAA"/>
    <property type="match status" value="1"/>
</dbReference>
<dbReference type="SUPFAM" id="SSF52540">
    <property type="entry name" value="P-loop containing nucleoside triphosphate hydrolases"/>
    <property type="match status" value="1"/>
</dbReference>
<dbReference type="PROSITE" id="PS00674">
    <property type="entry name" value="AAA"/>
    <property type="match status" value="1"/>
</dbReference>
<keyword id="KW-0067">ATP-binding</keyword>
<keyword id="KW-0143">Chaperone</keyword>
<keyword id="KW-0175">Coiled coil</keyword>
<keyword id="KW-0963">Cytoplasm</keyword>
<keyword id="KW-0547">Nucleotide-binding</keyword>
<keyword id="KW-0647">Proteasome</keyword>
<keyword id="KW-1185">Reference proteome</keyword>
<evidence type="ECO:0000255" key="1">
    <source>
        <dbReference type="HAMAP-Rule" id="MF_00553"/>
    </source>
</evidence>
<comment type="function">
    <text evidence="1">ATPase which is responsible for recognizing, binding, unfolding and translocation of substrate proteins into the archaeal 20S proteasome core particle. Is essential for opening the gate of the 20S proteasome via an interaction with its C-terminus, thereby allowing substrate entry and access to the site of proteolysis. Thus, the C-termini of the proteasomal ATPase function like a 'key in a lock' to induce gate opening and therefore regulate proteolysis. Unfolding activity requires energy from ATP hydrolysis, whereas ATP binding alone promotes ATPase-20S proteasome association which triggers gate opening, and supports translocation of unfolded substrates.</text>
</comment>
<comment type="subunit">
    <text evidence="1">Homohexamer. The hexameric complex has a two-ring architecture resembling a top hat that caps the 20S proteasome core at one or both ends. Upon ATP-binding, the C-terminus of PAN interacts with the alpha-rings of the proteasome core by binding to the intersubunit pockets.</text>
</comment>
<comment type="subcellular location">
    <subcellularLocation>
        <location evidence="1">Cytoplasm</location>
    </subcellularLocation>
</comment>
<comment type="domain">
    <text evidence="1">Consists of three main regions, an N-terminal coiled-coil domain that may assist in substrate recognition, an interdomain involved in PAN hexamerization, and a C-terminal ATPase domain of the AAA type.</text>
</comment>
<comment type="similarity">
    <text evidence="1">Belongs to the AAA ATPase family.</text>
</comment>
<accession>Q0W257</accession>
<proteinExistence type="inferred from homology"/>
<reference key="1">
    <citation type="journal article" date="2006" name="Science">
        <title>Genome of rice cluster I archaea -- the key methane producers in the rice rhizosphere.</title>
        <authorList>
            <person name="Erkel C."/>
            <person name="Kube M."/>
            <person name="Reinhardt R."/>
            <person name="Liesack W."/>
        </authorList>
    </citation>
    <scope>NUCLEOTIDE SEQUENCE [LARGE SCALE GENOMIC DNA]</scope>
    <source>
        <strain>DSM 22066 / NBRC 105507 / MRE50</strain>
    </source>
</reference>
<feature type="chain" id="PRO_1000017926" description="Proteasome-activating nucleotidase">
    <location>
        <begin position="1"/>
        <end position="417"/>
    </location>
</feature>
<feature type="region of interest" description="Docks into pockets in the proteasome alpha-ring to cause gate opening" evidence="1">
    <location>
        <begin position="415"/>
        <end position="417"/>
    </location>
</feature>
<feature type="coiled-coil region" evidence="1">
    <location>
        <begin position="24"/>
        <end position="78"/>
    </location>
</feature>
<feature type="binding site" evidence="1">
    <location>
        <begin position="203"/>
        <end position="208"/>
    </location>
    <ligand>
        <name>ATP</name>
        <dbReference type="ChEBI" id="CHEBI:30616"/>
    </ligand>
</feature>
<feature type="binding site" evidence="1">
    <location>
        <position position="342"/>
    </location>
    <ligand>
        <name>ATP</name>
        <dbReference type="ChEBI" id="CHEBI:30616"/>
    </ligand>
</feature>
<gene>
    <name evidence="1" type="primary">pan</name>
    <name type="ordered locus">UNCMA_07170</name>
    <name type="ORF">RCIX2455</name>
</gene>